<evidence type="ECO:0000250" key="1"/>
<evidence type="ECO:0000250" key="2">
    <source>
        <dbReference type="UniProtKB" id="Q9UBL0"/>
    </source>
</evidence>
<evidence type="ECO:0000256" key="3">
    <source>
        <dbReference type="SAM" id="MobiDB-lite"/>
    </source>
</evidence>
<evidence type="ECO:0000269" key="4">
    <source>
    </source>
</evidence>
<evidence type="ECO:0000269" key="5">
    <source>
    </source>
</evidence>
<evidence type="ECO:0000305" key="6"/>
<name>ARP21_BOVIN</name>
<proteinExistence type="evidence at protein level"/>
<keyword id="KW-0007">Acetylation</keyword>
<keyword id="KW-0112">Calmodulin-binding</keyword>
<keyword id="KW-0963">Cytoplasm</keyword>
<keyword id="KW-0903">Direct protein sequencing</keyword>
<keyword id="KW-0597">Phosphoprotein</keyword>
<keyword id="KW-1185">Reference proteome</keyword>
<protein>
    <recommendedName>
        <fullName>cAMP-regulated phosphoprotein 21</fullName>
        <shortName>ARPP-21</shortName>
    </recommendedName>
    <alternativeName>
        <fullName>Regulator of calmodulin signaling</fullName>
    </alternativeName>
</protein>
<comment type="function">
    <text evidence="1">May act as a competitive inhibitor of calmodulin-dependent enzymes such as calcineurin in neurons.</text>
</comment>
<comment type="subunit">
    <text evidence="4">Interacts with CALM1.</text>
</comment>
<comment type="subcellular location">
    <subcellularLocation>
        <location evidence="1">Cytoplasm</location>
    </subcellularLocation>
</comment>
<comment type="PTM">
    <text evidence="5">Phosphorylation at Ser-56 favors interaction with CALM1.</text>
</comment>
<accession>Q7M2N1</accession>
<sequence>MSEPGDLSQTIVEEGGPEQETATPENGVIKSESLDEEEKLELQRRLVAQNQERRKSKSGAGKGKLTRSLAVCEESSARPGGESLQDQTL</sequence>
<gene>
    <name type="primary">ARPP21</name>
    <name type="synonym">RCS</name>
</gene>
<reference key="1">
    <citation type="journal article" date="1989" name="J. Neurosci.">
        <title>ARPP-21, a cyclic AMP-regulated phosphoprotein enriched in dopamine-innervated brain regions. II. Molecular cloning and nucleotide sequence.</title>
        <authorList>
            <person name="Kurihara T."/>
            <person name="Ehrlich M.E."/>
            <person name="Horiuchi J."/>
            <person name="Nasu T."/>
            <person name="Greengard P."/>
        </authorList>
    </citation>
    <scope>NUCLEOTIDE SEQUENCE [MRNA]</scope>
</reference>
<reference key="2">
    <citation type="submission" date="2006-08" db="EMBL/GenBank/DDBJ databases">
        <authorList>
            <consortium name="NIH - Mammalian Gene Collection (MGC) project"/>
        </authorList>
    </citation>
    <scope>NUCLEOTIDE SEQUENCE [LARGE SCALE MRNA]</scope>
    <source>
        <strain>Hereford</strain>
        <tissue>Basal ganglia</tissue>
    </source>
</reference>
<reference key="3">
    <citation type="journal article" date="1989" name="J. Neurosci.">
        <title>ARPP-21, a cyclic AMP-regulated phosphoprotein enriched in dopamine-innervated brain regions. I. Amino acid sequence of ARPP-21B from bovine caudate nucleus.</title>
        <authorList>
            <person name="Williams K.R."/>
            <person name="Hemmings H.C. Jr."/>
            <person name="LoPresti M.B."/>
            <person name="Greengard P."/>
        </authorList>
    </citation>
    <scope>PROTEIN SEQUENCE OF 2-89</scope>
    <scope>ACETYLATION AT SER-2</scope>
    <scope>PHOSPHORYLATION AT SER-56</scope>
</reference>
<reference key="4">
    <citation type="journal article" date="2004" name="Science">
        <title>A network of control mediated by regulator of calcium/calmodulin-dependent signaling.</title>
        <authorList>
            <person name="Rakhilin S.V."/>
            <person name="Olson P.A."/>
            <person name="Nishi A."/>
            <person name="Starkova N.N."/>
            <person name="Fienberg A.A."/>
            <person name="Nairn A.C."/>
            <person name="Surmeier D.J."/>
            <person name="Greengard P."/>
        </authorList>
    </citation>
    <scope>INTERACTION WITH CALM1</scope>
</reference>
<dbReference type="EMBL" id="BC122647">
    <property type="protein sequence ID" value="AAI22648.1"/>
    <property type="molecule type" value="mRNA"/>
</dbReference>
<dbReference type="PIR" id="A34957">
    <property type="entry name" value="A34957"/>
</dbReference>
<dbReference type="RefSeq" id="NP_001070418.1">
    <property type="nucleotide sequence ID" value="NM_001076950.2"/>
</dbReference>
<dbReference type="RefSeq" id="XP_059735888.1">
    <property type="nucleotide sequence ID" value="XM_059879905.1"/>
</dbReference>
<dbReference type="STRING" id="9913.ENSBTAP00000062689"/>
<dbReference type="iPTMnet" id="Q7M2N1"/>
<dbReference type="PaxDb" id="9913-ENSBTAP00000053180"/>
<dbReference type="GeneID" id="618648"/>
<dbReference type="KEGG" id="bta:618648"/>
<dbReference type="CTD" id="10777"/>
<dbReference type="VEuPathDB" id="HostDB:ENSBTAG00000007732"/>
<dbReference type="eggNOG" id="KOG2953">
    <property type="taxonomic scope" value="Eukaryota"/>
</dbReference>
<dbReference type="HOGENOM" id="CLU_2256194_0_0_1"/>
<dbReference type="InParanoid" id="Q7M2N1"/>
<dbReference type="Proteomes" id="UP000009136">
    <property type="component" value="Chromosome 22"/>
</dbReference>
<dbReference type="Bgee" id="ENSBTAG00000007732">
    <property type="expression patterns" value="Expressed in floor plate of diencephalon and 77 other cell types or tissues"/>
</dbReference>
<dbReference type="GO" id="GO:0005737">
    <property type="term" value="C:cytoplasm"/>
    <property type="evidence" value="ECO:0007669"/>
    <property type="project" value="UniProtKB-SubCell"/>
</dbReference>
<dbReference type="GO" id="GO:0005516">
    <property type="term" value="F:calmodulin binding"/>
    <property type="evidence" value="ECO:0007669"/>
    <property type="project" value="UniProtKB-KW"/>
</dbReference>
<organism>
    <name type="scientific">Bos taurus</name>
    <name type="common">Bovine</name>
    <dbReference type="NCBI Taxonomy" id="9913"/>
    <lineage>
        <taxon>Eukaryota</taxon>
        <taxon>Metazoa</taxon>
        <taxon>Chordata</taxon>
        <taxon>Craniata</taxon>
        <taxon>Vertebrata</taxon>
        <taxon>Euteleostomi</taxon>
        <taxon>Mammalia</taxon>
        <taxon>Eutheria</taxon>
        <taxon>Laurasiatheria</taxon>
        <taxon>Artiodactyla</taxon>
        <taxon>Ruminantia</taxon>
        <taxon>Pecora</taxon>
        <taxon>Bovidae</taxon>
        <taxon>Bovinae</taxon>
        <taxon>Bos</taxon>
    </lineage>
</organism>
<feature type="initiator methionine" description="Removed" evidence="5">
    <location>
        <position position="1"/>
    </location>
</feature>
<feature type="chain" id="PRO_0000281925" description="cAMP-regulated phosphoprotein 21">
    <location>
        <begin position="2"/>
        <end position="89"/>
    </location>
</feature>
<feature type="region of interest" description="Disordered" evidence="3">
    <location>
        <begin position="1"/>
        <end position="89"/>
    </location>
</feature>
<feature type="modified residue" description="N-acetylserine" evidence="5">
    <location>
        <position position="2"/>
    </location>
</feature>
<feature type="modified residue" description="Phosphoserine" evidence="2">
    <location>
        <position position="33"/>
    </location>
</feature>
<feature type="modified residue" description="Phosphoserine" evidence="5">
    <location>
        <position position="56"/>
    </location>
</feature>
<feature type="sequence conflict" description="In Ref. 3; AA sequence." evidence="6" ref="3">
    <original>N</original>
    <variation>D</variation>
    <location>
        <position position="26"/>
    </location>
</feature>